<protein>
    <recommendedName>
        <fullName evidence="1">UPF0261 protein BP1203</fullName>
    </recommendedName>
</protein>
<keyword id="KW-1185">Reference proteome</keyword>
<comment type="similarity">
    <text evidence="1">Belongs to the UPF0261 family.</text>
</comment>
<proteinExistence type="inferred from homology"/>
<evidence type="ECO:0000255" key="1">
    <source>
        <dbReference type="HAMAP-Rule" id="MF_00677"/>
    </source>
</evidence>
<accession>Q7VYV4</accession>
<reference key="1">
    <citation type="journal article" date="2003" name="Nat. Genet.">
        <title>Comparative analysis of the genome sequences of Bordetella pertussis, Bordetella parapertussis and Bordetella bronchiseptica.</title>
        <authorList>
            <person name="Parkhill J."/>
            <person name="Sebaihia M."/>
            <person name="Preston A."/>
            <person name="Murphy L.D."/>
            <person name="Thomson N.R."/>
            <person name="Harris D.E."/>
            <person name="Holden M.T.G."/>
            <person name="Churcher C.M."/>
            <person name="Bentley S.D."/>
            <person name="Mungall K.L."/>
            <person name="Cerdeno-Tarraga A.-M."/>
            <person name="Temple L."/>
            <person name="James K.D."/>
            <person name="Harris B."/>
            <person name="Quail M.A."/>
            <person name="Achtman M."/>
            <person name="Atkin R."/>
            <person name="Baker S."/>
            <person name="Basham D."/>
            <person name="Bason N."/>
            <person name="Cherevach I."/>
            <person name="Chillingworth T."/>
            <person name="Collins M."/>
            <person name="Cronin A."/>
            <person name="Davis P."/>
            <person name="Doggett J."/>
            <person name="Feltwell T."/>
            <person name="Goble A."/>
            <person name="Hamlin N."/>
            <person name="Hauser H."/>
            <person name="Holroyd S."/>
            <person name="Jagels K."/>
            <person name="Leather S."/>
            <person name="Moule S."/>
            <person name="Norberczak H."/>
            <person name="O'Neil S."/>
            <person name="Ormond D."/>
            <person name="Price C."/>
            <person name="Rabbinowitsch E."/>
            <person name="Rutter S."/>
            <person name="Sanders M."/>
            <person name="Saunders D."/>
            <person name="Seeger K."/>
            <person name="Sharp S."/>
            <person name="Simmonds M."/>
            <person name="Skelton J."/>
            <person name="Squares R."/>
            <person name="Squares S."/>
            <person name="Stevens K."/>
            <person name="Unwin L."/>
            <person name="Whitehead S."/>
            <person name="Barrell B.G."/>
            <person name="Maskell D.J."/>
        </authorList>
    </citation>
    <scope>NUCLEOTIDE SEQUENCE [LARGE SCALE GENOMIC DNA]</scope>
    <source>
        <strain>Tohama I / ATCC BAA-589 / NCTC 13251</strain>
    </source>
</reference>
<name>Y1203_BORPE</name>
<feature type="chain" id="PRO_0000220208" description="UPF0261 protein BP1203">
    <location>
        <begin position="1"/>
        <end position="402"/>
    </location>
</feature>
<organism>
    <name type="scientific">Bordetella pertussis (strain Tohama I / ATCC BAA-589 / NCTC 13251)</name>
    <dbReference type="NCBI Taxonomy" id="257313"/>
    <lineage>
        <taxon>Bacteria</taxon>
        <taxon>Pseudomonadati</taxon>
        <taxon>Pseudomonadota</taxon>
        <taxon>Betaproteobacteria</taxon>
        <taxon>Burkholderiales</taxon>
        <taxon>Alcaligenaceae</taxon>
        <taxon>Bordetella</taxon>
    </lineage>
</organism>
<gene>
    <name type="ordered locus">BP1203</name>
</gene>
<sequence>MQEIEQRIYLAATYDTKGEEAEYLRQLLRRDGVMVVTVDVATSGQGSPAMVSAQEVAACHPQGAQAVFTGERGSAIVAMALAFERYLAGQRDVGAVLGIGGSGGTALVTPAMRALPVGVPKLMVSTMASGNVAPYVGPSDIAMMYSVTDVAGLNRISRRVLANAAGAIAGAFRQARQPIADDGRPAVGITMFGVTTPCVQHVTAALHDRYDCLVFHATGTGGQSMEKLADSRLLAGVLDLTTTEVCDFLFGGVLACTDDRFGAIARSGVPYVGSCGALDMVNFGALDTVPAACRERLLYPHNPQVTLMRTTAQENARQGAWIAERLNRCEGQVRFLIPEGGVSALDAPGQAFHDEAADAALFQALYDHVRQTDKRRLVRVPCHINDPLFARAAVEQFHEISQ</sequence>
<dbReference type="EMBL" id="BX640414">
    <property type="protein sequence ID" value="CAE41499.1"/>
    <property type="molecule type" value="Genomic_DNA"/>
</dbReference>
<dbReference type="RefSeq" id="NP_879976.1">
    <property type="nucleotide sequence ID" value="NC_002929.2"/>
</dbReference>
<dbReference type="RefSeq" id="WP_010930245.1">
    <property type="nucleotide sequence ID" value="NZ_CP039022.1"/>
</dbReference>
<dbReference type="SMR" id="Q7VYV4"/>
<dbReference type="STRING" id="257313.BP1203"/>
<dbReference type="PaxDb" id="257313-BP1203"/>
<dbReference type="KEGG" id="bpe:BP1203"/>
<dbReference type="PATRIC" id="fig|257313.5.peg.1297"/>
<dbReference type="eggNOG" id="COG5441">
    <property type="taxonomic scope" value="Bacteria"/>
</dbReference>
<dbReference type="HOGENOM" id="CLU_036813_1_0_4"/>
<dbReference type="Proteomes" id="UP000002676">
    <property type="component" value="Chromosome"/>
</dbReference>
<dbReference type="CDD" id="cd15488">
    <property type="entry name" value="Tm-1-like"/>
    <property type="match status" value="1"/>
</dbReference>
<dbReference type="Gene3D" id="3.40.50.12030">
    <property type="entry name" value="Uncharacterised protein family UPF0261, NC domain"/>
    <property type="match status" value="1"/>
</dbReference>
<dbReference type="Gene3D" id="3.40.50.12020">
    <property type="entry name" value="Uncharacterised protein family UPF0261, NN domain"/>
    <property type="match status" value="1"/>
</dbReference>
<dbReference type="HAMAP" id="MF_00677">
    <property type="entry name" value="UPF0261"/>
    <property type="match status" value="1"/>
</dbReference>
<dbReference type="InterPro" id="IPR051353">
    <property type="entry name" value="Tobamovirus_resist_UPF0261"/>
</dbReference>
<dbReference type="InterPro" id="IPR008322">
    <property type="entry name" value="UPF0261"/>
</dbReference>
<dbReference type="InterPro" id="IPR056778">
    <property type="entry name" value="UPF0261_C"/>
</dbReference>
<dbReference type="InterPro" id="IPR044122">
    <property type="entry name" value="UPF0261_N"/>
</dbReference>
<dbReference type="NCBIfam" id="NF002673">
    <property type="entry name" value="PRK02399.1-1"/>
    <property type="match status" value="1"/>
</dbReference>
<dbReference type="NCBIfam" id="NF002674">
    <property type="entry name" value="PRK02399.1-2"/>
    <property type="match status" value="1"/>
</dbReference>
<dbReference type="PANTHER" id="PTHR31862">
    <property type="entry name" value="UPF0261 DOMAIN PROTEIN (AFU_ORTHOLOGUE AFUA_1G10120)"/>
    <property type="match status" value="1"/>
</dbReference>
<dbReference type="PANTHER" id="PTHR31862:SF1">
    <property type="entry name" value="UPF0261 DOMAIN PROTEIN (AFU_ORTHOLOGUE AFUA_1G10120)"/>
    <property type="match status" value="1"/>
</dbReference>
<dbReference type="Pfam" id="PF06792">
    <property type="entry name" value="UPF0261"/>
    <property type="match status" value="1"/>
</dbReference>
<dbReference type="Pfam" id="PF23189">
    <property type="entry name" value="UPF0261_C"/>
    <property type="match status" value="1"/>
</dbReference>
<dbReference type="PIRSF" id="PIRSF033271">
    <property type="entry name" value="UCP033271"/>
    <property type="match status" value="1"/>
</dbReference>